<protein>
    <recommendedName>
        <fullName evidence="1">Large ribosomal subunit protein uL23</fullName>
    </recommendedName>
    <alternativeName>
        <fullName evidence="2">50S ribosomal protein L23</fullName>
    </alternativeName>
</protein>
<organism>
    <name type="scientific">Anaeromyxobacter sp. (strain K)</name>
    <dbReference type="NCBI Taxonomy" id="447217"/>
    <lineage>
        <taxon>Bacteria</taxon>
        <taxon>Pseudomonadati</taxon>
        <taxon>Myxococcota</taxon>
        <taxon>Myxococcia</taxon>
        <taxon>Myxococcales</taxon>
        <taxon>Cystobacterineae</taxon>
        <taxon>Anaeromyxobacteraceae</taxon>
        <taxon>Anaeromyxobacter</taxon>
    </lineage>
</organism>
<dbReference type="EMBL" id="CP001131">
    <property type="protein sequence ID" value="ACG73163.1"/>
    <property type="molecule type" value="Genomic_DNA"/>
</dbReference>
<dbReference type="RefSeq" id="WP_012525975.1">
    <property type="nucleotide sequence ID" value="NC_011145.1"/>
</dbReference>
<dbReference type="SMR" id="B4UBA1"/>
<dbReference type="KEGG" id="ank:AnaeK_1935"/>
<dbReference type="HOGENOM" id="CLU_037562_3_1_7"/>
<dbReference type="OrthoDB" id="9793353at2"/>
<dbReference type="Proteomes" id="UP000001871">
    <property type="component" value="Chromosome"/>
</dbReference>
<dbReference type="GO" id="GO:1990904">
    <property type="term" value="C:ribonucleoprotein complex"/>
    <property type="evidence" value="ECO:0007669"/>
    <property type="project" value="UniProtKB-KW"/>
</dbReference>
<dbReference type="GO" id="GO:0005840">
    <property type="term" value="C:ribosome"/>
    <property type="evidence" value="ECO:0007669"/>
    <property type="project" value="UniProtKB-KW"/>
</dbReference>
<dbReference type="GO" id="GO:0019843">
    <property type="term" value="F:rRNA binding"/>
    <property type="evidence" value="ECO:0007669"/>
    <property type="project" value="UniProtKB-UniRule"/>
</dbReference>
<dbReference type="GO" id="GO:0003735">
    <property type="term" value="F:structural constituent of ribosome"/>
    <property type="evidence" value="ECO:0007669"/>
    <property type="project" value="InterPro"/>
</dbReference>
<dbReference type="GO" id="GO:0006412">
    <property type="term" value="P:translation"/>
    <property type="evidence" value="ECO:0007669"/>
    <property type="project" value="UniProtKB-UniRule"/>
</dbReference>
<dbReference type="FunFam" id="3.30.70.330:FF:000001">
    <property type="entry name" value="50S ribosomal protein L23"/>
    <property type="match status" value="1"/>
</dbReference>
<dbReference type="Gene3D" id="3.30.70.330">
    <property type="match status" value="1"/>
</dbReference>
<dbReference type="HAMAP" id="MF_01369_B">
    <property type="entry name" value="Ribosomal_uL23_B"/>
    <property type="match status" value="1"/>
</dbReference>
<dbReference type="InterPro" id="IPR012677">
    <property type="entry name" value="Nucleotide-bd_a/b_plait_sf"/>
</dbReference>
<dbReference type="InterPro" id="IPR013025">
    <property type="entry name" value="Ribosomal_uL23-like"/>
</dbReference>
<dbReference type="InterPro" id="IPR012678">
    <property type="entry name" value="Ribosomal_uL23/eL15/eS24_sf"/>
</dbReference>
<dbReference type="InterPro" id="IPR001014">
    <property type="entry name" value="Ribosomal_uL23_CS"/>
</dbReference>
<dbReference type="NCBIfam" id="NF004359">
    <property type="entry name" value="PRK05738.1-3"/>
    <property type="match status" value="1"/>
</dbReference>
<dbReference type="NCBIfam" id="NF004363">
    <property type="entry name" value="PRK05738.2-4"/>
    <property type="match status" value="1"/>
</dbReference>
<dbReference type="NCBIfam" id="NF004366">
    <property type="entry name" value="PRK05738.3-2"/>
    <property type="match status" value="1"/>
</dbReference>
<dbReference type="PANTHER" id="PTHR11620">
    <property type="entry name" value="60S RIBOSOMAL PROTEIN L23A"/>
    <property type="match status" value="1"/>
</dbReference>
<dbReference type="Pfam" id="PF00276">
    <property type="entry name" value="Ribosomal_L23"/>
    <property type="match status" value="1"/>
</dbReference>
<dbReference type="SUPFAM" id="SSF54189">
    <property type="entry name" value="Ribosomal proteins S24e, L23 and L15e"/>
    <property type="match status" value="1"/>
</dbReference>
<dbReference type="PROSITE" id="PS00050">
    <property type="entry name" value="RIBOSOMAL_L23"/>
    <property type="match status" value="1"/>
</dbReference>
<evidence type="ECO:0000255" key="1">
    <source>
        <dbReference type="HAMAP-Rule" id="MF_01369"/>
    </source>
</evidence>
<evidence type="ECO:0000305" key="2"/>
<proteinExistence type="inferred from homology"/>
<keyword id="KW-0687">Ribonucleoprotein</keyword>
<keyword id="KW-0689">Ribosomal protein</keyword>
<keyword id="KW-0694">RNA-binding</keyword>
<keyword id="KW-0699">rRNA-binding</keyword>
<sequence>MNLAVQDVVKRPLITEKAERAREANRQYAFEVHRDATKIQVKQAVEKLFNVHVLDVRTAIARGKNKRVGRNVGRRPNWKKAYVTLKEGDTIALFEGT</sequence>
<name>RL23_ANASK</name>
<accession>B4UBA1</accession>
<feature type="chain" id="PRO_1000144524" description="Large ribosomal subunit protein uL23">
    <location>
        <begin position="1"/>
        <end position="97"/>
    </location>
</feature>
<reference key="1">
    <citation type="submission" date="2008-08" db="EMBL/GenBank/DDBJ databases">
        <title>Complete sequence of Anaeromyxobacter sp. K.</title>
        <authorList>
            <consortium name="US DOE Joint Genome Institute"/>
            <person name="Lucas S."/>
            <person name="Copeland A."/>
            <person name="Lapidus A."/>
            <person name="Glavina del Rio T."/>
            <person name="Dalin E."/>
            <person name="Tice H."/>
            <person name="Bruce D."/>
            <person name="Goodwin L."/>
            <person name="Pitluck S."/>
            <person name="Saunders E."/>
            <person name="Brettin T."/>
            <person name="Detter J.C."/>
            <person name="Han C."/>
            <person name="Larimer F."/>
            <person name="Land M."/>
            <person name="Hauser L."/>
            <person name="Kyrpides N."/>
            <person name="Ovchinnikiva G."/>
            <person name="Beliaev A."/>
        </authorList>
    </citation>
    <scope>NUCLEOTIDE SEQUENCE [LARGE SCALE GENOMIC DNA]</scope>
    <source>
        <strain>K</strain>
    </source>
</reference>
<comment type="function">
    <text evidence="1">One of the early assembly proteins it binds 23S rRNA. One of the proteins that surrounds the polypeptide exit tunnel on the outside of the ribosome. Forms the main docking site for trigger factor binding to the ribosome.</text>
</comment>
<comment type="subunit">
    <text evidence="1">Part of the 50S ribosomal subunit. Contacts protein L29, and trigger factor when it is bound to the ribosome.</text>
</comment>
<comment type="similarity">
    <text evidence="1">Belongs to the universal ribosomal protein uL23 family.</text>
</comment>
<gene>
    <name evidence="1" type="primary">rplW</name>
    <name type="ordered locus">AnaeK_1935</name>
</gene>